<evidence type="ECO:0000255" key="1">
    <source>
        <dbReference type="HAMAP-Rule" id="MF_01857"/>
    </source>
</evidence>
<gene>
    <name evidence="1" type="primary">rlmI</name>
    <name type="ordered locus">SPA1770</name>
</gene>
<protein>
    <recommendedName>
        <fullName evidence="1">Ribosomal RNA large subunit methyltransferase I</fullName>
        <ecNumber evidence="1">2.1.1.191</ecNumber>
    </recommendedName>
    <alternativeName>
        <fullName evidence="1">23S rRNA m5C1962 methyltransferase</fullName>
    </alternativeName>
    <alternativeName>
        <fullName evidence="1">rRNA (cytosine-C(5)-)-methyltransferase RlmI</fullName>
    </alternativeName>
</protein>
<comment type="function">
    <text evidence="1">Specifically methylates the cytosine at position 1962 (m5C1962) of 23S rRNA.</text>
</comment>
<comment type="catalytic activity">
    <reaction evidence="1">
        <text>cytidine(1962) in 23S rRNA + S-adenosyl-L-methionine = 5-methylcytidine(1962) in 23S rRNA + S-adenosyl-L-homocysteine + H(+)</text>
        <dbReference type="Rhea" id="RHEA:42912"/>
        <dbReference type="Rhea" id="RHEA-COMP:10382"/>
        <dbReference type="Rhea" id="RHEA-COMP:10386"/>
        <dbReference type="ChEBI" id="CHEBI:15378"/>
        <dbReference type="ChEBI" id="CHEBI:57856"/>
        <dbReference type="ChEBI" id="CHEBI:59789"/>
        <dbReference type="ChEBI" id="CHEBI:74483"/>
        <dbReference type="ChEBI" id="CHEBI:82748"/>
        <dbReference type="EC" id="2.1.1.191"/>
    </reaction>
</comment>
<comment type="subcellular location">
    <subcellularLocation>
        <location evidence="1">Cytoplasm</location>
    </subcellularLocation>
</comment>
<comment type="similarity">
    <text evidence="1">Belongs to the methyltransferase superfamily. RlmI family.</text>
</comment>
<sequence length="403" mass="45202">MTESTFPQYPRLVLSKGREKSLLRRHPWVFSGAVSRLEGKANLGETIDIVDHQGKWLARGAWSPASQIRARVWTFDKAESIDIAFFTRRLRQAQQWRDWLAKKDGLDSYRLIAGESDGLPGVTIDRFGYFLVLQLLSAGAEYQRAALISALQTCYPDCAIYDRSDVAVRKKEGMALTQGPVTGELPPALLPIEEHGMKLLVDIQGGHKTGYYLDQRDSRLATRRYVENQRVLNCFSYTGGFAVSALMGGCRQVVSVDTSQDALDIARQNVELNQLDLSKAEFVRDDVFKLLRAYREHGEKFDVIIMDPPKFVENKSQLMGACRGYKDINMLAIQLLNPGGILLTFSCSGLMTSDLFQKIIADAAIDAGRDVQFIEQFRQAADHPVIATYPEGLYLKGFACRVM</sequence>
<dbReference type="EC" id="2.1.1.191" evidence="1"/>
<dbReference type="EMBL" id="CP000026">
    <property type="protein sequence ID" value="AAV77686.1"/>
    <property type="molecule type" value="Genomic_DNA"/>
</dbReference>
<dbReference type="RefSeq" id="WP_000140483.1">
    <property type="nucleotide sequence ID" value="NC_006511.1"/>
</dbReference>
<dbReference type="SMR" id="Q5PGB6"/>
<dbReference type="KEGG" id="spt:SPA1770"/>
<dbReference type="HOGENOM" id="CLU_014042_0_0_6"/>
<dbReference type="Proteomes" id="UP000008185">
    <property type="component" value="Chromosome"/>
</dbReference>
<dbReference type="GO" id="GO:0005737">
    <property type="term" value="C:cytoplasm"/>
    <property type="evidence" value="ECO:0007669"/>
    <property type="project" value="UniProtKB-SubCell"/>
</dbReference>
<dbReference type="GO" id="GO:0003723">
    <property type="term" value="F:RNA binding"/>
    <property type="evidence" value="ECO:0007669"/>
    <property type="project" value="UniProtKB-KW"/>
</dbReference>
<dbReference type="GO" id="GO:0016434">
    <property type="term" value="F:rRNA (cytosine) methyltransferase activity"/>
    <property type="evidence" value="ECO:0007669"/>
    <property type="project" value="UniProtKB-UniRule"/>
</dbReference>
<dbReference type="CDD" id="cd02440">
    <property type="entry name" value="AdoMet_MTases"/>
    <property type="match status" value="1"/>
</dbReference>
<dbReference type="CDD" id="cd21153">
    <property type="entry name" value="PUA_RlmI"/>
    <property type="match status" value="1"/>
</dbReference>
<dbReference type="CDD" id="cd11572">
    <property type="entry name" value="RlmI_M_like"/>
    <property type="match status" value="1"/>
</dbReference>
<dbReference type="FunFam" id="3.40.50.150:FF:000044">
    <property type="entry name" value="Ribosomal RNA large subunit methyltransferase I"/>
    <property type="match status" value="1"/>
</dbReference>
<dbReference type="Gene3D" id="2.30.130.10">
    <property type="entry name" value="PUA domain"/>
    <property type="match status" value="1"/>
</dbReference>
<dbReference type="Gene3D" id="3.30.750.80">
    <property type="entry name" value="RNA methyltransferase domain (HRMD) like"/>
    <property type="match status" value="1"/>
</dbReference>
<dbReference type="Gene3D" id="3.40.50.150">
    <property type="entry name" value="Vaccinia Virus protein VP39"/>
    <property type="match status" value="1"/>
</dbReference>
<dbReference type="HAMAP" id="MF_01857">
    <property type="entry name" value="23SrRNA_methyltr_I"/>
    <property type="match status" value="1"/>
</dbReference>
<dbReference type="InterPro" id="IPR002478">
    <property type="entry name" value="PUA"/>
</dbReference>
<dbReference type="InterPro" id="IPR015947">
    <property type="entry name" value="PUA-like_sf"/>
</dbReference>
<dbReference type="InterPro" id="IPR036974">
    <property type="entry name" value="PUA_sf"/>
</dbReference>
<dbReference type="InterPro" id="IPR023542">
    <property type="entry name" value="RLMI"/>
</dbReference>
<dbReference type="InterPro" id="IPR041532">
    <property type="entry name" value="RlmI-like_PUA"/>
</dbReference>
<dbReference type="InterPro" id="IPR019614">
    <property type="entry name" value="SAM-dep_methyl-trfase"/>
</dbReference>
<dbReference type="InterPro" id="IPR029063">
    <property type="entry name" value="SAM-dependent_MTases_sf"/>
</dbReference>
<dbReference type="NCBIfam" id="NF011707">
    <property type="entry name" value="PRK15128.1"/>
    <property type="match status" value="1"/>
</dbReference>
<dbReference type="PANTHER" id="PTHR42873">
    <property type="entry name" value="RIBOSOMAL RNA LARGE SUBUNIT METHYLTRANSFERASE"/>
    <property type="match status" value="1"/>
</dbReference>
<dbReference type="PANTHER" id="PTHR42873:SF1">
    <property type="entry name" value="S-ADENOSYLMETHIONINE-DEPENDENT METHYLTRANSFERASE DOMAIN-CONTAINING PROTEIN"/>
    <property type="match status" value="1"/>
</dbReference>
<dbReference type="Pfam" id="PF10672">
    <property type="entry name" value="Methyltrans_SAM"/>
    <property type="match status" value="1"/>
</dbReference>
<dbReference type="Pfam" id="PF17785">
    <property type="entry name" value="PUA_3"/>
    <property type="match status" value="1"/>
</dbReference>
<dbReference type="SMART" id="SM00359">
    <property type="entry name" value="PUA"/>
    <property type="match status" value="1"/>
</dbReference>
<dbReference type="SUPFAM" id="SSF88697">
    <property type="entry name" value="PUA domain-like"/>
    <property type="match status" value="1"/>
</dbReference>
<dbReference type="SUPFAM" id="SSF53335">
    <property type="entry name" value="S-adenosyl-L-methionine-dependent methyltransferases"/>
    <property type="match status" value="1"/>
</dbReference>
<dbReference type="PROSITE" id="PS50890">
    <property type="entry name" value="PUA"/>
    <property type="match status" value="1"/>
</dbReference>
<proteinExistence type="inferred from homology"/>
<keyword id="KW-0963">Cytoplasm</keyword>
<keyword id="KW-0489">Methyltransferase</keyword>
<keyword id="KW-0694">RNA-binding</keyword>
<keyword id="KW-0698">rRNA processing</keyword>
<keyword id="KW-0949">S-adenosyl-L-methionine</keyword>
<keyword id="KW-0808">Transferase</keyword>
<accession>Q5PGB6</accession>
<organism>
    <name type="scientific">Salmonella paratyphi A (strain ATCC 9150 / SARB42)</name>
    <dbReference type="NCBI Taxonomy" id="295319"/>
    <lineage>
        <taxon>Bacteria</taxon>
        <taxon>Pseudomonadati</taxon>
        <taxon>Pseudomonadota</taxon>
        <taxon>Gammaproteobacteria</taxon>
        <taxon>Enterobacterales</taxon>
        <taxon>Enterobacteriaceae</taxon>
        <taxon>Salmonella</taxon>
    </lineage>
</organism>
<feature type="chain" id="PRO_0000366247" description="Ribosomal RNA large subunit methyltransferase I">
    <location>
        <begin position="1"/>
        <end position="403"/>
    </location>
</feature>
<feature type="domain" description="PUA" evidence="1">
    <location>
        <begin position="9"/>
        <end position="88"/>
    </location>
</feature>
<reference key="1">
    <citation type="journal article" date="2004" name="Nat. Genet.">
        <title>Comparison of genome degradation in Paratyphi A and Typhi, human-restricted serovars of Salmonella enterica that cause typhoid.</title>
        <authorList>
            <person name="McClelland M."/>
            <person name="Sanderson K.E."/>
            <person name="Clifton S.W."/>
            <person name="Latreille P."/>
            <person name="Porwollik S."/>
            <person name="Sabo A."/>
            <person name="Meyer R."/>
            <person name="Bieri T."/>
            <person name="Ozersky P."/>
            <person name="McLellan M."/>
            <person name="Harkins C.R."/>
            <person name="Wang C."/>
            <person name="Nguyen C."/>
            <person name="Berghoff A."/>
            <person name="Elliott G."/>
            <person name="Kohlberg S."/>
            <person name="Strong C."/>
            <person name="Du F."/>
            <person name="Carter J."/>
            <person name="Kremizki C."/>
            <person name="Layman D."/>
            <person name="Leonard S."/>
            <person name="Sun H."/>
            <person name="Fulton L."/>
            <person name="Nash W."/>
            <person name="Miner T."/>
            <person name="Minx P."/>
            <person name="Delehaunty K."/>
            <person name="Fronick C."/>
            <person name="Magrini V."/>
            <person name="Nhan M."/>
            <person name="Warren W."/>
            <person name="Florea L."/>
            <person name="Spieth J."/>
            <person name="Wilson R.K."/>
        </authorList>
    </citation>
    <scope>NUCLEOTIDE SEQUENCE [LARGE SCALE GENOMIC DNA]</scope>
    <source>
        <strain>ATCC 9150 / SARB42</strain>
    </source>
</reference>
<name>RLMI_SALPA</name>